<sequence>MFASYLLLVLWIIRLVPTTHAHTGNDAEYLLNTVLKRDATSLSRNAYLDSEATSGATNYCSDCDNDEVIVTVDGTSTIWTILLDSTISTLVTTTSTEKTTLTSCGQSCTKSKDASSVSSSSASSSTSRSLIFRTSTKTVTDTTTLPTVTEINTFTTTDSHIVLVYTDINSESTITGDYTFIKNKNTRTVIITDYVTSTVGGETQIVTQTTTSVVYELVVTCPDHDFATTLTGSETFVPPTTAPKPVETPSPEPSTTILSIKSESSVPSATTSVLDTSITLETSSSSIEFSTSTQESSSIGPSSSSSIGSCTSSSISTEESLSTTKLSSSFTSISSWEELSSSFTQSTTSSNAEPSSSFAESFTTESLSSTIEATSSMEDISNNSVLTSSIFSETTTNESSSYTDEPSSSEEITNTYEPSSSTESSTTDQFSSLLSSSLPVTSTSSTTISSATPITTVLSTSITSQDTNCEATITNISTNTLIETITVNGNTTIYTETQLSTYLTSNTSINCPNTNSATTTTTQVIPTATTEQIHTTTLNGSIIVSTETATLKTTVIITHCPECTNESSTSEYSSSLKAESSQQSIPTIESNLSELSVSSTLSLVESTASGKCSGLTTTTFTSIVSTTTESIYTITSNESTFEMTTTVTNIGTIVITTCPTITPVSSSYSSSESLSSSVSTSLLTESNSTISQSTVSTDKSSLTNDNQISTVSTETPLTSITIIETTSKTTESLYTTTSNDSTHIFTTTIIDVQTNTIVTCPTTTSTLTSSHTSDNEKPASLSSSSLIESDHIADGTTTSTTFQSTSTTTVDHHCSSCSEILLSTSSSIIGNKSTSTSISSIETSASSSYHSSEPEVMSSSSSTSIKQSSDSIPSTSQTHVSTTSSSVSSLETTTTTTENSPTSNGFSSSSIVTSVNVPDYVSSSVSSTSSTTSSPSTESSSNGLVSTVTESSTANENTSEITTIDNTSITSEKVTGTNSNPKTSEIIKDATITTSGNVESLHSTTPISSTSIISTNAISSSDTTTLTITNTLTYSIDSITTMKTSSITTAPPPPQQKESSSVLSSSLIINSSTPTIIPTINIPITFEGNANSLGLKNGDNSWIIGIMMIGLLMI</sequence>
<feature type="signal peptide" evidence="2">
    <location>
        <begin position="1"/>
        <end position="21"/>
    </location>
</feature>
<feature type="chain" id="PRO_0000424943" description="Filamentous growth regulator 23">
    <location>
        <begin position="22"/>
        <end position="1089"/>
    </location>
</feature>
<feature type="propeptide" id="PRO_0000424944" description="Removed in mature form" evidence="2">
    <location>
        <begin position="1090"/>
        <end position="1114"/>
    </location>
</feature>
<feature type="region of interest" description="Disordered" evidence="4">
    <location>
        <begin position="232"/>
        <end position="256"/>
    </location>
</feature>
<feature type="region of interest" description="Disordered" evidence="4">
    <location>
        <begin position="284"/>
        <end position="314"/>
    </location>
</feature>
<feature type="region of interest" description="Disordered" evidence="4">
    <location>
        <begin position="392"/>
        <end position="430"/>
    </location>
</feature>
<feature type="region of interest" description="Disordered" evidence="4">
    <location>
        <begin position="764"/>
        <end position="784"/>
    </location>
</feature>
<feature type="region of interest" description="Disordered" evidence="4">
    <location>
        <begin position="844"/>
        <end position="963"/>
    </location>
</feature>
<feature type="compositionally biased region" description="Pro residues" evidence="4">
    <location>
        <begin position="240"/>
        <end position="252"/>
    </location>
</feature>
<feature type="compositionally biased region" description="Low complexity" evidence="4">
    <location>
        <begin position="844"/>
        <end position="910"/>
    </location>
</feature>
<feature type="compositionally biased region" description="Low complexity" evidence="4">
    <location>
        <begin position="922"/>
        <end position="941"/>
    </location>
</feature>
<feature type="compositionally biased region" description="Polar residues" evidence="4">
    <location>
        <begin position="942"/>
        <end position="963"/>
    </location>
</feature>
<feature type="lipid moiety-binding region" description="GPI-anchor amidated asparagine" evidence="2">
    <location>
        <position position="1089"/>
    </location>
</feature>
<feature type="glycosylation site" description="N-linked (GlcNAc...) asparagine" evidence="3">
    <location>
        <position position="382"/>
    </location>
</feature>
<feature type="glycosylation site" description="N-linked (GlcNAc...) asparagine" evidence="3">
    <location>
        <position position="397"/>
    </location>
</feature>
<feature type="glycosylation site" description="N-linked (GlcNAc...) asparagine" evidence="3">
    <location>
        <position position="475"/>
    </location>
</feature>
<feature type="glycosylation site" description="N-linked (GlcNAc...) asparagine" evidence="3">
    <location>
        <position position="490"/>
    </location>
</feature>
<feature type="glycosylation site" description="N-linked (GlcNAc...) asparagine" evidence="3">
    <location>
        <position position="506"/>
    </location>
</feature>
<feature type="glycosylation site" description="N-linked (GlcNAc...) asparagine" evidence="3">
    <location>
        <position position="539"/>
    </location>
</feature>
<feature type="glycosylation site" description="N-linked (GlcNAc...) asparagine" evidence="3">
    <location>
        <position position="565"/>
    </location>
</feature>
<feature type="glycosylation site" description="N-linked (GlcNAc...) asparagine" evidence="3">
    <location>
        <position position="591"/>
    </location>
</feature>
<feature type="glycosylation site" description="N-linked (GlcNAc...) asparagine" evidence="3">
    <location>
        <position position="637"/>
    </location>
</feature>
<feature type="glycosylation site" description="N-linked (GlcNAc...) asparagine" evidence="3">
    <location>
        <position position="687"/>
    </location>
</feature>
<feature type="glycosylation site" description="N-linked (GlcNAc...) asparagine" evidence="3">
    <location>
        <position position="739"/>
    </location>
</feature>
<feature type="glycosylation site" description="N-linked (GlcNAc...) asparagine" evidence="3">
    <location>
        <position position="831"/>
    </location>
</feature>
<feature type="glycosylation site" description="N-linked (GlcNAc...) asparagine" evidence="3">
    <location>
        <position position="957"/>
    </location>
</feature>
<feature type="glycosylation site" description="N-linked (GlcNAc...) asparagine" evidence="3">
    <location>
        <position position="966"/>
    </location>
</feature>
<feature type="glycosylation site" description="N-linked (GlcNAc...) asparagine" evidence="3">
    <location>
        <position position="1070"/>
    </location>
</feature>
<comment type="function">
    <text evidence="1 8">Putative adhesin which may be involved in cell adhesion and virulence (By similarity). Involved in the regulation of filamentous growth.</text>
</comment>
<comment type="subcellular location">
    <subcellularLocation>
        <location evidence="10">Cell membrane</location>
        <topology evidence="10">Lipid-anchor</topology>
        <topology evidence="10">GPI-anchor</topology>
    </subcellularLocation>
</comment>
<comment type="induction">
    <text evidence="6 7 9">Induced in biofilms and by alpha factor. Repressed by HAP43.</text>
</comment>
<comment type="disruption phenotype">
    <text evidence="5">Affects filamentous growth.</text>
</comment>
<gene>
    <name type="primary">FGR23</name>
    <name type="synonym">PGA40</name>
    <name type="ordered locus">CAALFM_C302300WA</name>
    <name type="ORF">CaO19.1616</name>
    <name type="ORF">CaO19.9183</name>
</gene>
<accession>Q5AJV5</accession>
<accession>A0A1D8PJI3</accession>
<accession>Q5AJH8</accession>
<protein>
    <recommendedName>
        <fullName>Filamentous growth regulator 23</fullName>
    </recommendedName>
    <alternativeName>
        <fullName>Predicted GPI-anchored protein 40</fullName>
    </alternativeName>
</protein>
<organism>
    <name type="scientific">Candida albicans (strain SC5314 / ATCC MYA-2876)</name>
    <name type="common">Yeast</name>
    <dbReference type="NCBI Taxonomy" id="237561"/>
    <lineage>
        <taxon>Eukaryota</taxon>
        <taxon>Fungi</taxon>
        <taxon>Dikarya</taxon>
        <taxon>Ascomycota</taxon>
        <taxon>Saccharomycotina</taxon>
        <taxon>Pichiomycetes</taxon>
        <taxon>Debaryomycetaceae</taxon>
        <taxon>Candida/Lodderomyces clade</taxon>
        <taxon>Candida</taxon>
    </lineage>
</organism>
<name>FGR23_CANAL</name>
<reference key="1">
    <citation type="journal article" date="2004" name="Proc. Natl. Acad. Sci. U.S.A.">
        <title>The diploid genome sequence of Candida albicans.</title>
        <authorList>
            <person name="Jones T."/>
            <person name="Federspiel N.A."/>
            <person name="Chibana H."/>
            <person name="Dungan J."/>
            <person name="Kalman S."/>
            <person name="Magee B.B."/>
            <person name="Newport G."/>
            <person name="Thorstenson Y.R."/>
            <person name="Agabian N."/>
            <person name="Magee P.T."/>
            <person name="Davis R.W."/>
            <person name="Scherer S."/>
        </authorList>
    </citation>
    <scope>NUCLEOTIDE SEQUENCE [LARGE SCALE GENOMIC DNA]</scope>
    <source>
        <strain>SC5314 / ATCC MYA-2876</strain>
    </source>
</reference>
<reference key="2">
    <citation type="journal article" date="2007" name="Genome Biol.">
        <title>Assembly of the Candida albicans genome into sixteen supercontigs aligned on the eight chromosomes.</title>
        <authorList>
            <person name="van het Hoog M."/>
            <person name="Rast T.J."/>
            <person name="Martchenko M."/>
            <person name="Grindle S."/>
            <person name="Dignard D."/>
            <person name="Hogues H."/>
            <person name="Cuomo C."/>
            <person name="Berriman M."/>
            <person name="Scherer S."/>
            <person name="Magee B.B."/>
            <person name="Whiteway M."/>
            <person name="Chibana H."/>
            <person name="Nantel A."/>
            <person name="Magee P.T."/>
        </authorList>
    </citation>
    <scope>GENOME REANNOTATION</scope>
    <source>
        <strain>SC5314 / ATCC MYA-2876</strain>
    </source>
</reference>
<reference key="3">
    <citation type="journal article" date="2013" name="Genome Biol.">
        <title>Assembly of a phased diploid Candida albicans genome facilitates allele-specific measurements and provides a simple model for repeat and indel structure.</title>
        <authorList>
            <person name="Muzzey D."/>
            <person name="Schwartz K."/>
            <person name="Weissman J.S."/>
            <person name="Sherlock G."/>
        </authorList>
    </citation>
    <scope>NUCLEOTIDE SEQUENCE [LARGE SCALE GENOMIC DNA]</scope>
    <scope>GENOME REANNOTATION</scope>
    <source>
        <strain>SC5314 / ATCC MYA-2876</strain>
    </source>
</reference>
<reference key="4">
    <citation type="journal article" date="2003" name="EMBO J.">
        <title>Haploinsufficiency-based large-scale forward genetic analysis of filamentous growth in the diploid human fungal pathogen C.albicans.</title>
        <authorList>
            <person name="Uhl M.A."/>
            <person name="Biery M."/>
            <person name="Craig N."/>
            <person name="Johnson A.D."/>
        </authorList>
    </citation>
    <scope>DISRUPTION PHENOTYPE</scope>
</reference>
<reference key="5">
    <citation type="journal article" date="2003" name="Mol. Cell. Biol.">
        <title>Identification and characterization of a Candida albicans mating pheromone.</title>
        <authorList>
            <person name="Bennett R.J."/>
            <person name="Uhl M.A."/>
            <person name="Miller M.G."/>
            <person name="Johnson A.D."/>
        </authorList>
    </citation>
    <scope>INDUCTION</scope>
</reference>
<reference key="6">
    <citation type="journal article" date="2003" name="Yeast">
        <title>Genome-wide identification of fungal GPI proteins.</title>
        <authorList>
            <person name="De Groot P.W."/>
            <person name="Hellingwerf K.J."/>
            <person name="Klis F.M."/>
        </authorList>
    </citation>
    <scope>PREDICTION OF GPI-ANCHOR</scope>
</reference>
<reference key="7">
    <citation type="journal article" date="2011" name="BMC Genomics">
        <title>FungalRV: adhesin prediction and immunoinformatics portal for human fungal pathogens.</title>
        <authorList>
            <person name="Chaudhuri R."/>
            <person name="Ansari F.A."/>
            <person name="Raghunandanan M.V."/>
            <person name="Ramachandran S."/>
        </authorList>
    </citation>
    <scope>FUNCTION</scope>
</reference>
<reference key="8">
    <citation type="journal article" date="2011" name="J. Biol. Chem.">
        <title>Cap2-HAP complex is a critical transcriptional regulator that has dual but contrasting roles in regulation of iron homeostasis in Candida albicans.</title>
        <authorList>
            <person name="Singh R.P."/>
            <person name="Prasad H.K."/>
            <person name="Sinha I."/>
            <person name="Agarwal N."/>
            <person name="Natarajan K."/>
        </authorList>
    </citation>
    <scope>INDUCTION</scope>
</reference>
<reference key="9">
    <citation type="journal article" date="2011" name="Mol. Microbiol.">
        <title>Contribution of the glycolytic flux and hypoxia adaptation to efficient biofilm formation by Candida albicans.</title>
        <authorList>
            <person name="Bonhomme J."/>
            <person name="Chauvel M."/>
            <person name="Goyard S."/>
            <person name="Roux P."/>
            <person name="Rossignol T."/>
            <person name="d'Enfert C."/>
        </authorList>
    </citation>
    <scope>INDUCTION</scope>
</reference>
<proteinExistence type="evidence at protein level"/>
<evidence type="ECO:0000250" key="1"/>
<evidence type="ECO:0000255" key="2"/>
<evidence type="ECO:0000255" key="3">
    <source>
        <dbReference type="PROSITE-ProRule" id="PRU00498"/>
    </source>
</evidence>
<evidence type="ECO:0000256" key="4">
    <source>
        <dbReference type="SAM" id="MobiDB-lite"/>
    </source>
</evidence>
<evidence type="ECO:0000269" key="5">
    <source>
    </source>
</evidence>
<evidence type="ECO:0000269" key="6">
    <source>
    </source>
</evidence>
<evidence type="ECO:0000269" key="7">
    <source>
    </source>
</evidence>
<evidence type="ECO:0000269" key="8">
    <source>
    </source>
</evidence>
<evidence type="ECO:0000269" key="9">
    <source>
    </source>
</evidence>
<evidence type="ECO:0000305" key="10"/>
<keyword id="KW-0130">Cell adhesion</keyword>
<keyword id="KW-1003">Cell membrane</keyword>
<keyword id="KW-0325">Glycoprotein</keyword>
<keyword id="KW-0336">GPI-anchor</keyword>
<keyword id="KW-0449">Lipoprotein</keyword>
<keyword id="KW-0472">Membrane</keyword>
<keyword id="KW-1185">Reference proteome</keyword>
<keyword id="KW-0732">Signal</keyword>
<dbReference type="EMBL" id="CP017625">
    <property type="protein sequence ID" value="AOW28267.1"/>
    <property type="molecule type" value="Genomic_DNA"/>
</dbReference>
<dbReference type="RefSeq" id="XP_721695.2">
    <property type="nucleotide sequence ID" value="XM_716602.2"/>
</dbReference>
<dbReference type="STRING" id="237561.Q5AJV5"/>
<dbReference type="GlyCosmos" id="Q5AJV5">
    <property type="glycosylation" value="15 sites, No reported glycans"/>
</dbReference>
<dbReference type="EnsemblFungi" id="C3_02300W_A-T">
    <property type="protein sequence ID" value="C3_02300W_A-T-p1"/>
    <property type="gene ID" value="C3_02300W_A"/>
</dbReference>
<dbReference type="GeneID" id="3636555"/>
<dbReference type="KEGG" id="cal:CAALFM_C302300WA"/>
<dbReference type="CGD" id="CAL0000178630">
    <property type="gene designation" value="FGR23"/>
</dbReference>
<dbReference type="VEuPathDB" id="FungiDB:C3_02300W_A"/>
<dbReference type="HOGENOM" id="CLU_281042_0_0_1"/>
<dbReference type="InParanoid" id="Q5AJV5"/>
<dbReference type="OrthoDB" id="10643405at2759"/>
<dbReference type="PRO" id="PR:Q5AJV5"/>
<dbReference type="Proteomes" id="UP000000559">
    <property type="component" value="Chromosome 3"/>
</dbReference>
<dbReference type="GO" id="GO:0005886">
    <property type="term" value="C:plasma membrane"/>
    <property type="evidence" value="ECO:0007669"/>
    <property type="project" value="UniProtKB-SubCell"/>
</dbReference>
<dbReference type="GO" id="GO:0098552">
    <property type="term" value="C:side of membrane"/>
    <property type="evidence" value="ECO:0007669"/>
    <property type="project" value="UniProtKB-KW"/>
</dbReference>
<dbReference type="GO" id="GO:0007155">
    <property type="term" value="P:cell adhesion"/>
    <property type="evidence" value="ECO:0007669"/>
    <property type="project" value="UniProtKB-KW"/>
</dbReference>
<dbReference type="GO" id="GO:0009267">
    <property type="term" value="P:cellular response to starvation"/>
    <property type="evidence" value="ECO:0000315"/>
    <property type="project" value="CGD"/>
</dbReference>
<dbReference type="GO" id="GO:0030447">
    <property type="term" value="P:filamentous growth"/>
    <property type="evidence" value="ECO:0000315"/>
    <property type="project" value="CGD"/>
</dbReference>
<dbReference type="GO" id="GO:0036180">
    <property type="term" value="P:filamentous growth of a population of unicellular organisms in response to biotic stimulus"/>
    <property type="evidence" value="ECO:0000315"/>
    <property type="project" value="CGD"/>
</dbReference>
<dbReference type="GO" id="GO:0036170">
    <property type="term" value="P:filamentous growth of a population of unicellular organisms in response to starvation"/>
    <property type="evidence" value="ECO:0000315"/>
    <property type="project" value="CGD"/>
</dbReference>